<proteinExistence type="inferred from homology"/>
<gene>
    <name type="primary">vapB3</name>
    <name type="ordered locus">MJ1122</name>
</gene>
<comment type="function">
    <text evidence="1">Possibly the antitoxin component of a type II toxin-antitoxin (TA) system. Its cognate toxin is VapC3 (Potential).</text>
</comment>
<comment type="similarity">
    <text evidence="1">Belongs to the UPF0330 family.</text>
</comment>
<accession>Q58522</accession>
<reference key="1">
    <citation type="journal article" date="1996" name="Science">
        <title>Complete genome sequence of the methanogenic archaeon, Methanococcus jannaschii.</title>
        <authorList>
            <person name="Bult C.J."/>
            <person name="White O."/>
            <person name="Olsen G.J."/>
            <person name="Zhou L."/>
            <person name="Fleischmann R.D."/>
            <person name="Sutton G.G."/>
            <person name="Blake J.A."/>
            <person name="FitzGerald L.M."/>
            <person name="Clayton R.A."/>
            <person name="Gocayne J.D."/>
            <person name="Kerlavage A.R."/>
            <person name="Dougherty B.A."/>
            <person name="Tomb J.-F."/>
            <person name="Adams M.D."/>
            <person name="Reich C.I."/>
            <person name="Overbeek R."/>
            <person name="Kirkness E.F."/>
            <person name="Weinstock K.G."/>
            <person name="Merrick J.M."/>
            <person name="Glodek A."/>
            <person name="Scott J.L."/>
            <person name="Geoghagen N.S.M."/>
            <person name="Weidman J.F."/>
            <person name="Fuhrmann J.L."/>
            <person name="Nguyen D."/>
            <person name="Utterback T.R."/>
            <person name="Kelley J.M."/>
            <person name="Peterson J.D."/>
            <person name="Sadow P.W."/>
            <person name="Hanna M.C."/>
            <person name="Cotton M.D."/>
            <person name="Roberts K.M."/>
            <person name="Hurst M.A."/>
            <person name="Kaine B.P."/>
            <person name="Borodovsky M."/>
            <person name="Klenk H.-P."/>
            <person name="Fraser C.M."/>
            <person name="Smith H.O."/>
            <person name="Woese C.R."/>
            <person name="Venter J.C."/>
        </authorList>
    </citation>
    <scope>NUCLEOTIDE SEQUENCE [LARGE SCALE GENOMIC DNA]</scope>
    <source>
        <strain>ATCC 43067 / DSM 2661 / JAL-1 / JCM 10045 / NBRC 100440</strain>
    </source>
</reference>
<reference key="2">
    <citation type="journal article" date="2005" name="Nucleic Acids Res.">
        <title>Toxin-antitoxin loci are highly abundant in free-living but lost from host-associated prokaryotes.</title>
        <authorList>
            <person name="Pandey D.P."/>
            <person name="Gerdes K."/>
        </authorList>
    </citation>
    <scope>POSSIBLE FUNCTION</scope>
    <source>
        <strain>ATCC 43067 / DSM 2661 / JAL-1 / JCM 10045 / NBRC 100440</strain>
    </source>
</reference>
<feature type="chain" id="PRO_0000157108" description="Putative antitoxin VapB3">
    <location>
        <begin position="1"/>
        <end position="77"/>
    </location>
</feature>
<dbReference type="EMBL" id="L77117">
    <property type="protein sequence ID" value="AAB99124.1"/>
    <property type="molecule type" value="Genomic_DNA"/>
</dbReference>
<dbReference type="PIR" id="A64440">
    <property type="entry name" value="A64440"/>
</dbReference>
<dbReference type="SMR" id="Q58522"/>
<dbReference type="FunCoup" id="Q58522">
    <property type="interactions" value="4"/>
</dbReference>
<dbReference type="STRING" id="243232.MJ_1122"/>
<dbReference type="PaxDb" id="243232-MJ_1122"/>
<dbReference type="EnsemblBacteria" id="AAB99124">
    <property type="protein sequence ID" value="AAB99124"/>
    <property type="gene ID" value="MJ_1122"/>
</dbReference>
<dbReference type="KEGG" id="mja:MJ_1122"/>
<dbReference type="eggNOG" id="arCOG02681">
    <property type="taxonomic scope" value="Archaea"/>
</dbReference>
<dbReference type="HOGENOM" id="CLU_170073_3_0_2"/>
<dbReference type="InParanoid" id="Q58522"/>
<dbReference type="OrthoDB" id="231302at2157"/>
<dbReference type="PhylomeDB" id="Q58522"/>
<dbReference type="Proteomes" id="UP000000805">
    <property type="component" value="Chromosome"/>
</dbReference>
<dbReference type="HAMAP" id="MF_00794">
    <property type="entry name" value="UPF0330"/>
    <property type="match status" value="1"/>
</dbReference>
<dbReference type="InterPro" id="IPR003847">
    <property type="entry name" value="Put_antitoxin"/>
</dbReference>
<dbReference type="NCBIfam" id="NF010250">
    <property type="entry name" value="PRK13696.1-2"/>
    <property type="match status" value="1"/>
</dbReference>
<dbReference type="Pfam" id="PF02697">
    <property type="entry name" value="VAPB_antitox"/>
    <property type="match status" value="1"/>
</dbReference>
<sequence length="77" mass="9135">MINMATITIDDDVYKELLKLKGRKSVSEFIKELLEERKRKNLDVFMIAFGSRSEEDVEKLKKELKEAEKWMQSLIQV</sequence>
<name>VAPB3_METJA</name>
<keyword id="KW-1185">Reference proteome</keyword>
<keyword id="KW-1277">Toxin-antitoxin system</keyword>
<organism>
    <name type="scientific">Methanocaldococcus jannaschii (strain ATCC 43067 / DSM 2661 / JAL-1 / JCM 10045 / NBRC 100440)</name>
    <name type="common">Methanococcus jannaschii</name>
    <dbReference type="NCBI Taxonomy" id="243232"/>
    <lineage>
        <taxon>Archaea</taxon>
        <taxon>Methanobacteriati</taxon>
        <taxon>Methanobacteriota</taxon>
        <taxon>Methanomada group</taxon>
        <taxon>Methanococci</taxon>
        <taxon>Methanococcales</taxon>
        <taxon>Methanocaldococcaceae</taxon>
        <taxon>Methanocaldococcus</taxon>
    </lineage>
</organism>
<protein>
    <recommendedName>
        <fullName evidence="1">Putative antitoxin VapB3</fullName>
    </recommendedName>
</protein>
<evidence type="ECO:0000255" key="1">
    <source>
        <dbReference type="HAMAP-Rule" id="MF_00794"/>
    </source>
</evidence>